<name>HRK_HUMAN</name>
<reference key="1">
    <citation type="journal article" date="1997" name="EMBO J.">
        <title>Harakiri, a novel regulator of cell death, encodes a protein that activates apoptosis and interacts selectively with survival-promoting proteins Bcl-2 and Bcl-X(L).</title>
        <authorList>
            <person name="Inohara N."/>
            <person name="Ding L."/>
            <person name="Chen S."/>
            <person name="Nunez G."/>
        </authorList>
    </citation>
    <scope>NUCLEOTIDE SEQUENCE [MRNA]</scope>
    <scope>FUNCTION</scope>
    <scope>INTERACTION WITH BCL2 AND BCL2L1</scope>
</reference>
<reference key="2">
    <citation type="journal article" date="2006" name="Nature">
        <title>The finished DNA sequence of human chromosome 12.</title>
        <authorList>
            <person name="Scherer S.E."/>
            <person name="Muzny D.M."/>
            <person name="Buhay C.J."/>
            <person name="Chen R."/>
            <person name="Cree A."/>
            <person name="Ding Y."/>
            <person name="Dugan-Rocha S."/>
            <person name="Gill R."/>
            <person name="Gunaratne P."/>
            <person name="Harris R.A."/>
            <person name="Hawes A.C."/>
            <person name="Hernandez J."/>
            <person name="Hodgson A.V."/>
            <person name="Hume J."/>
            <person name="Jackson A."/>
            <person name="Khan Z.M."/>
            <person name="Kovar-Smith C."/>
            <person name="Lewis L.R."/>
            <person name="Lozado R.J."/>
            <person name="Metzker M.L."/>
            <person name="Milosavljevic A."/>
            <person name="Miner G.R."/>
            <person name="Montgomery K.T."/>
            <person name="Morgan M.B."/>
            <person name="Nazareth L.V."/>
            <person name="Scott G."/>
            <person name="Sodergren E."/>
            <person name="Song X.-Z."/>
            <person name="Steffen D."/>
            <person name="Lovering R.C."/>
            <person name="Wheeler D.A."/>
            <person name="Worley K.C."/>
            <person name="Yuan Y."/>
            <person name="Zhang Z."/>
            <person name="Adams C.Q."/>
            <person name="Ansari-Lari M.A."/>
            <person name="Ayele M."/>
            <person name="Brown M.J."/>
            <person name="Chen G."/>
            <person name="Chen Z."/>
            <person name="Clerc-Blankenburg K.P."/>
            <person name="Davis C."/>
            <person name="Delgado O."/>
            <person name="Dinh H.H."/>
            <person name="Draper H."/>
            <person name="Gonzalez-Garay M.L."/>
            <person name="Havlak P."/>
            <person name="Jackson L.R."/>
            <person name="Jacob L.S."/>
            <person name="Kelly S.H."/>
            <person name="Li L."/>
            <person name="Li Z."/>
            <person name="Liu J."/>
            <person name="Liu W."/>
            <person name="Lu J."/>
            <person name="Maheshwari M."/>
            <person name="Nguyen B.-V."/>
            <person name="Okwuonu G.O."/>
            <person name="Pasternak S."/>
            <person name="Perez L.M."/>
            <person name="Plopper F.J.H."/>
            <person name="Santibanez J."/>
            <person name="Shen H."/>
            <person name="Tabor P.E."/>
            <person name="Verduzco D."/>
            <person name="Waldron L."/>
            <person name="Wang Q."/>
            <person name="Williams G.A."/>
            <person name="Zhang J."/>
            <person name="Zhou J."/>
            <person name="Allen C.C."/>
            <person name="Amin A.G."/>
            <person name="Anyalebechi V."/>
            <person name="Bailey M."/>
            <person name="Barbaria J.A."/>
            <person name="Bimage K.E."/>
            <person name="Bryant N.P."/>
            <person name="Burch P.E."/>
            <person name="Burkett C.E."/>
            <person name="Burrell K.L."/>
            <person name="Calderon E."/>
            <person name="Cardenas V."/>
            <person name="Carter K."/>
            <person name="Casias K."/>
            <person name="Cavazos I."/>
            <person name="Cavazos S.R."/>
            <person name="Ceasar H."/>
            <person name="Chacko J."/>
            <person name="Chan S.N."/>
            <person name="Chavez D."/>
            <person name="Christopoulos C."/>
            <person name="Chu J."/>
            <person name="Cockrell R."/>
            <person name="Cox C.D."/>
            <person name="Dang M."/>
            <person name="Dathorne S.R."/>
            <person name="David R."/>
            <person name="Davis C.M."/>
            <person name="Davy-Carroll L."/>
            <person name="Deshazo D.R."/>
            <person name="Donlin J.E."/>
            <person name="D'Souza L."/>
            <person name="Eaves K.A."/>
            <person name="Egan A."/>
            <person name="Emery-Cohen A.J."/>
            <person name="Escotto M."/>
            <person name="Flagg N."/>
            <person name="Forbes L.D."/>
            <person name="Gabisi A.M."/>
            <person name="Garza M."/>
            <person name="Hamilton C."/>
            <person name="Henderson N."/>
            <person name="Hernandez O."/>
            <person name="Hines S."/>
            <person name="Hogues M.E."/>
            <person name="Huang M."/>
            <person name="Idlebird D.G."/>
            <person name="Johnson R."/>
            <person name="Jolivet A."/>
            <person name="Jones S."/>
            <person name="Kagan R."/>
            <person name="King L.M."/>
            <person name="Leal B."/>
            <person name="Lebow H."/>
            <person name="Lee S."/>
            <person name="LeVan J.M."/>
            <person name="Lewis L.C."/>
            <person name="London P."/>
            <person name="Lorensuhewa L.M."/>
            <person name="Loulseged H."/>
            <person name="Lovett D.A."/>
            <person name="Lucier A."/>
            <person name="Lucier R.L."/>
            <person name="Ma J."/>
            <person name="Madu R.C."/>
            <person name="Mapua P."/>
            <person name="Martindale A.D."/>
            <person name="Martinez E."/>
            <person name="Massey E."/>
            <person name="Mawhiney S."/>
            <person name="Meador M.G."/>
            <person name="Mendez S."/>
            <person name="Mercado C."/>
            <person name="Mercado I.C."/>
            <person name="Merritt C.E."/>
            <person name="Miner Z.L."/>
            <person name="Minja E."/>
            <person name="Mitchell T."/>
            <person name="Mohabbat F."/>
            <person name="Mohabbat K."/>
            <person name="Montgomery B."/>
            <person name="Moore N."/>
            <person name="Morris S."/>
            <person name="Munidasa M."/>
            <person name="Ngo R.N."/>
            <person name="Nguyen N.B."/>
            <person name="Nickerson E."/>
            <person name="Nwaokelemeh O.O."/>
            <person name="Nwokenkwo S."/>
            <person name="Obregon M."/>
            <person name="Oguh M."/>
            <person name="Oragunye N."/>
            <person name="Oviedo R.J."/>
            <person name="Parish B.J."/>
            <person name="Parker D.N."/>
            <person name="Parrish J."/>
            <person name="Parks K.L."/>
            <person name="Paul H.A."/>
            <person name="Payton B.A."/>
            <person name="Perez A."/>
            <person name="Perrin W."/>
            <person name="Pickens A."/>
            <person name="Primus E.L."/>
            <person name="Pu L.-L."/>
            <person name="Puazo M."/>
            <person name="Quiles M.M."/>
            <person name="Quiroz J.B."/>
            <person name="Rabata D."/>
            <person name="Reeves K."/>
            <person name="Ruiz S.J."/>
            <person name="Shao H."/>
            <person name="Sisson I."/>
            <person name="Sonaike T."/>
            <person name="Sorelle R.P."/>
            <person name="Sutton A.E."/>
            <person name="Svatek A.F."/>
            <person name="Svetz L.A."/>
            <person name="Tamerisa K.S."/>
            <person name="Taylor T.R."/>
            <person name="Teague B."/>
            <person name="Thomas N."/>
            <person name="Thorn R.D."/>
            <person name="Trejos Z.Y."/>
            <person name="Trevino B.K."/>
            <person name="Ukegbu O.N."/>
            <person name="Urban J.B."/>
            <person name="Vasquez L.I."/>
            <person name="Vera V.A."/>
            <person name="Villasana D.M."/>
            <person name="Wang L."/>
            <person name="Ward-Moore S."/>
            <person name="Warren J.T."/>
            <person name="Wei X."/>
            <person name="White F."/>
            <person name="Williamson A.L."/>
            <person name="Wleczyk R."/>
            <person name="Wooden H.S."/>
            <person name="Wooden S.H."/>
            <person name="Yen J."/>
            <person name="Yoon L."/>
            <person name="Yoon V."/>
            <person name="Zorrilla S.E."/>
            <person name="Nelson D."/>
            <person name="Kucherlapati R."/>
            <person name="Weinstock G."/>
            <person name="Gibbs R.A."/>
        </authorList>
    </citation>
    <scope>NUCLEOTIDE SEQUENCE [LARGE SCALE GENOMIC DNA]</scope>
</reference>
<reference key="3">
    <citation type="journal article" date="2004" name="Cell Death Differ.">
        <title>Physical and functional interaction between BH3-only protein Hrk and mitochondrial pore-forming protein p32.</title>
        <authorList>
            <person name="Sunayama J."/>
            <person name="Ando Y."/>
            <person name="Itoh N."/>
            <person name="Tomiyama A."/>
            <person name="Sakurada K."/>
            <person name="Sugiyama A."/>
            <person name="Kang D."/>
            <person name="Tashiro F."/>
            <person name="Gotoh Y."/>
            <person name="Kuchino Y."/>
            <person name="Kitanaka C."/>
        </authorList>
    </citation>
    <scope>FUNCTION</scope>
    <scope>INTERACTION WITH C1QBP AND BCL2L1</scope>
    <scope>SUBCELLULAR LOCATION</scope>
</reference>
<reference key="4">
    <citation type="journal article" date="2011" name="PLoS ONE">
        <title>Intrinsic order and disorder in the BCL-2 member harakiri: insights into its proapoptotic activity.</title>
        <authorList>
            <person name="Barrera-Vilarmau S."/>
            <person name="Obregon P."/>
            <person name="de Alba E."/>
        </authorList>
    </citation>
    <scope>STRUCTURE BY NMR OF 22-91</scope>
    <scope>SUBCELLULAR LOCATION</scope>
    <scope>CIRCULAR DICHROISM</scope>
    <scope>INTERACTION WITH BCL2 AND BCL2L1</scope>
</reference>
<comment type="function">
    <text evidence="2 4">Promotes apoptosis.</text>
</comment>
<comment type="subunit">
    <text evidence="2 3 4">Interacts with BCL2 and BCL2L1. Interacts with C1QBP.</text>
</comment>
<comment type="interaction">
    <interactant intactId="EBI-701322">
        <id>O00198</id>
    </interactant>
    <interactant intactId="EBI-287195">
        <id>Q07817-1</id>
        <label>BCL2L1</label>
    </interactant>
    <organismsDiffer>false</organismsDiffer>
    <experiments>3</experiments>
</comment>
<comment type="interaction">
    <interactant intactId="EBI-701322">
        <id>O00198</id>
    </interactant>
    <interactant intactId="EBI-347528">
        <id>Q07021</id>
        <label>C1QBP</label>
    </interactant>
    <organismsDiffer>false</organismsDiffer>
    <experiments>7</experiments>
</comment>
<comment type="subcellular location">
    <subcellularLocation>
        <location>Membrane</location>
        <topology>Single-pass membrane protein</topology>
    </subcellularLocation>
    <subcellularLocation>
        <location>Mitochondrion</location>
    </subcellularLocation>
</comment>
<comment type="domain">
    <text>The BH3 motif is required for the induction of cell death.</text>
</comment>
<comment type="online information" name="Atlas of Genetics and Cytogenetics in Oncology and Haematology">
    <link uri="https://atlasgeneticsoncology.org/gene/40865/HRK"/>
</comment>
<proteinExistence type="evidence at protein level"/>
<sequence>MCPCPLHRGRGPPAVCACSAGRLGLRSSAAQLTAARLKALGDELHQRTMWRRRARSRRAPAPGALPTYWPWLCAAAQVAALAAWLLGRRNL</sequence>
<organism>
    <name type="scientific">Homo sapiens</name>
    <name type="common">Human</name>
    <dbReference type="NCBI Taxonomy" id="9606"/>
    <lineage>
        <taxon>Eukaryota</taxon>
        <taxon>Metazoa</taxon>
        <taxon>Chordata</taxon>
        <taxon>Craniata</taxon>
        <taxon>Vertebrata</taxon>
        <taxon>Euteleostomi</taxon>
        <taxon>Mammalia</taxon>
        <taxon>Eutheria</taxon>
        <taxon>Euarchontoglires</taxon>
        <taxon>Primates</taxon>
        <taxon>Haplorrhini</taxon>
        <taxon>Catarrhini</taxon>
        <taxon>Hominidae</taxon>
        <taxon>Homo</taxon>
    </lineage>
</organism>
<dbReference type="EMBL" id="U76376">
    <property type="protein sequence ID" value="AAC34931.1"/>
    <property type="molecule type" value="mRNA"/>
</dbReference>
<dbReference type="EMBL" id="AC083806">
    <property type="status" value="NOT_ANNOTATED_CDS"/>
    <property type="molecule type" value="Genomic_DNA"/>
</dbReference>
<dbReference type="CCDS" id="CCDS9181.1"/>
<dbReference type="RefSeq" id="NP_003797.1">
    <property type="nucleotide sequence ID" value="NM_003806.4"/>
</dbReference>
<dbReference type="RefSeq" id="XP_016875635.1">
    <property type="nucleotide sequence ID" value="XM_017020146.1"/>
</dbReference>
<dbReference type="PDB" id="2L58">
    <property type="method" value="NMR"/>
    <property type="chains" value="A=22-53"/>
</dbReference>
<dbReference type="PDB" id="2L5B">
    <property type="method" value="NMR"/>
    <property type="chains" value="A=61-91"/>
</dbReference>
<dbReference type="PDB" id="6XY4">
    <property type="method" value="X-ray"/>
    <property type="resolution" value="2.05 A"/>
    <property type="chains" value="B=26-51"/>
</dbReference>
<dbReference type="PDB" id="7P0U">
    <property type="method" value="X-ray"/>
    <property type="resolution" value="1.99 A"/>
    <property type="chains" value="C/E/G/U=26-51"/>
</dbReference>
<dbReference type="PDBsum" id="2L58"/>
<dbReference type="PDBsum" id="2L5B"/>
<dbReference type="PDBsum" id="6XY4"/>
<dbReference type="PDBsum" id="7P0U"/>
<dbReference type="SMR" id="O00198"/>
<dbReference type="BioGRID" id="114276">
    <property type="interactions" value="16"/>
</dbReference>
<dbReference type="ELM" id="O00198"/>
<dbReference type="FunCoup" id="O00198">
    <property type="interactions" value="223"/>
</dbReference>
<dbReference type="IntAct" id="O00198">
    <property type="interactions" value="7"/>
</dbReference>
<dbReference type="STRING" id="9606.ENSP00000257572"/>
<dbReference type="BioMuta" id="HRK"/>
<dbReference type="MassIVE" id="O00198"/>
<dbReference type="PaxDb" id="9606-ENSP00000257572"/>
<dbReference type="PeptideAtlas" id="O00198"/>
<dbReference type="Antibodypedia" id="18831">
    <property type="antibodies" value="201 antibodies from 29 providers"/>
</dbReference>
<dbReference type="DNASU" id="8739"/>
<dbReference type="Ensembl" id="ENST00000257572.5">
    <property type="protein sequence ID" value="ENSP00000257572.4"/>
    <property type="gene ID" value="ENSG00000135116.9"/>
</dbReference>
<dbReference type="GeneID" id="8739"/>
<dbReference type="KEGG" id="hsa:8739"/>
<dbReference type="MANE-Select" id="ENST00000257572.5">
    <property type="protein sequence ID" value="ENSP00000257572.4"/>
    <property type="RefSeq nucleotide sequence ID" value="NM_003806.4"/>
    <property type="RefSeq protein sequence ID" value="NP_003797.1"/>
</dbReference>
<dbReference type="UCSC" id="uc001twe.5">
    <property type="organism name" value="human"/>
</dbReference>
<dbReference type="AGR" id="HGNC:5185"/>
<dbReference type="CTD" id="8739"/>
<dbReference type="DisGeNET" id="8739"/>
<dbReference type="GeneCards" id="HRK"/>
<dbReference type="HGNC" id="HGNC:5185">
    <property type="gene designation" value="HRK"/>
</dbReference>
<dbReference type="HPA" id="ENSG00000135116">
    <property type="expression patterns" value="Group enriched (brain, choroid plexus, lymphoid tissue, pituitary gland, thyroid gland)"/>
</dbReference>
<dbReference type="MIM" id="603447">
    <property type="type" value="gene"/>
</dbReference>
<dbReference type="neXtProt" id="NX_O00198"/>
<dbReference type="OpenTargets" id="ENSG00000135116"/>
<dbReference type="PharmGKB" id="PA29459"/>
<dbReference type="VEuPathDB" id="HostDB:ENSG00000135116"/>
<dbReference type="eggNOG" id="ENOG502T2F4">
    <property type="taxonomic scope" value="Eukaryota"/>
</dbReference>
<dbReference type="GeneTree" id="ENSGT00390000007050"/>
<dbReference type="HOGENOM" id="CLU_2426351_0_0_1"/>
<dbReference type="InParanoid" id="O00198"/>
<dbReference type="OMA" id="QERTMWR"/>
<dbReference type="OrthoDB" id="9894001at2759"/>
<dbReference type="PAN-GO" id="O00198">
    <property type="GO annotations" value="2 GO annotations based on evolutionary models"/>
</dbReference>
<dbReference type="PhylomeDB" id="O00198"/>
<dbReference type="TreeFam" id="TF338168"/>
<dbReference type="PathwayCommons" id="O00198"/>
<dbReference type="SignaLink" id="O00198"/>
<dbReference type="SIGNOR" id="O00198"/>
<dbReference type="BioGRID-ORCS" id="8739">
    <property type="hits" value="26 hits in 1138 CRISPR screens"/>
</dbReference>
<dbReference type="ChiTaRS" id="HRK">
    <property type="organism name" value="human"/>
</dbReference>
<dbReference type="EvolutionaryTrace" id="O00198"/>
<dbReference type="GeneWiki" id="HRK_(gene)"/>
<dbReference type="GenomeRNAi" id="8739"/>
<dbReference type="Pharos" id="O00198">
    <property type="development level" value="Tbio"/>
</dbReference>
<dbReference type="PRO" id="PR:O00198"/>
<dbReference type="Proteomes" id="UP000005640">
    <property type="component" value="Chromosome 12"/>
</dbReference>
<dbReference type="RNAct" id="O00198">
    <property type="molecule type" value="protein"/>
</dbReference>
<dbReference type="Bgee" id="ENSG00000135116">
    <property type="expression patterns" value="Expressed in buccal mucosa cell and 114 other cell types or tissues"/>
</dbReference>
<dbReference type="ExpressionAtlas" id="O00198">
    <property type="expression patterns" value="baseline and differential"/>
</dbReference>
<dbReference type="GO" id="GO:0016020">
    <property type="term" value="C:membrane"/>
    <property type="evidence" value="ECO:0007669"/>
    <property type="project" value="UniProtKB-SubCell"/>
</dbReference>
<dbReference type="GO" id="GO:0005739">
    <property type="term" value="C:mitochondrion"/>
    <property type="evidence" value="ECO:0000314"/>
    <property type="project" value="UniProtKB"/>
</dbReference>
<dbReference type="GO" id="GO:0006915">
    <property type="term" value="P:apoptotic process"/>
    <property type="evidence" value="ECO:0007669"/>
    <property type="project" value="UniProtKB-KW"/>
</dbReference>
<dbReference type="GO" id="GO:0051365">
    <property type="term" value="P:cellular response to potassium ion starvation"/>
    <property type="evidence" value="ECO:0007669"/>
    <property type="project" value="Ensembl"/>
</dbReference>
<dbReference type="GO" id="GO:0043065">
    <property type="term" value="P:positive regulation of apoptotic process"/>
    <property type="evidence" value="ECO:0000315"/>
    <property type="project" value="UniProtKB"/>
</dbReference>
<dbReference type="GO" id="GO:0043525">
    <property type="term" value="P:positive regulation of neuron apoptotic process"/>
    <property type="evidence" value="ECO:0007669"/>
    <property type="project" value="Ensembl"/>
</dbReference>
<dbReference type="GO" id="GO:0031334">
    <property type="term" value="P:positive regulation of protein-containing complex assembly"/>
    <property type="evidence" value="ECO:0000314"/>
    <property type="project" value="BHF-UCL"/>
</dbReference>
<dbReference type="GO" id="GO:0090200">
    <property type="term" value="P:positive regulation of release of cytochrome c from mitochondria"/>
    <property type="evidence" value="ECO:0000314"/>
    <property type="project" value="BHF-UCL"/>
</dbReference>
<dbReference type="InterPro" id="IPR017249">
    <property type="entry name" value="Apoptosis_activator_harakiri"/>
</dbReference>
<dbReference type="InterPro" id="IPR020728">
    <property type="entry name" value="Bcl2_BH3_motif_CS"/>
</dbReference>
<dbReference type="PANTHER" id="PTHR15056">
    <property type="entry name" value="ACTIVATOR OF APOPTOSIS HARAKIRI"/>
    <property type="match status" value="1"/>
</dbReference>
<dbReference type="PANTHER" id="PTHR15056:SF0">
    <property type="entry name" value="ACTIVATOR OF APOPTOSIS HARAKIRI"/>
    <property type="match status" value="1"/>
</dbReference>
<dbReference type="Pfam" id="PF15196">
    <property type="entry name" value="Harakiri"/>
    <property type="match status" value="1"/>
</dbReference>
<dbReference type="PIRSF" id="PIRSF037635">
    <property type="entry name" value="BID3"/>
    <property type="match status" value="1"/>
</dbReference>
<dbReference type="PROSITE" id="PS01259">
    <property type="entry name" value="BH3"/>
    <property type="match status" value="1"/>
</dbReference>
<evidence type="ECO:0000255" key="1"/>
<evidence type="ECO:0000269" key="2">
    <source>
    </source>
</evidence>
<evidence type="ECO:0000269" key="3">
    <source>
    </source>
</evidence>
<evidence type="ECO:0000269" key="4">
    <source>
    </source>
</evidence>
<evidence type="ECO:0007829" key="5">
    <source>
        <dbReference type="PDB" id="2L5B"/>
    </source>
</evidence>
<evidence type="ECO:0007829" key="6">
    <source>
        <dbReference type="PDB" id="7P0U"/>
    </source>
</evidence>
<feature type="chain" id="PRO_0000143106" description="Activator of apoptosis harakiri">
    <location>
        <begin position="1"/>
        <end position="91"/>
    </location>
</feature>
<feature type="transmembrane region" description="Helical" evidence="1">
    <location>
        <begin position="69"/>
        <end position="87"/>
    </location>
</feature>
<feature type="short sequence motif" description="BH3">
    <location>
        <begin position="33"/>
        <end position="47"/>
    </location>
</feature>
<feature type="helix" evidence="6">
    <location>
        <begin position="31"/>
        <end position="49"/>
    </location>
</feature>
<feature type="helix" evidence="5">
    <location>
        <begin position="69"/>
        <end position="85"/>
    </location>
</feature>
<protein>
    <recommendedName>
        <fullName>Activator of apoptosis harakiri</fullName>
    </recommendedName>
    <alternativeName>
        <fullName>BH3-interacting domain-containing protein 3</fullName>
    </alternativeName>
    <alternativeName>
        <fullName>Neuronal death protein DP5</fullName>
    </alternativeName>
</protein>
<accession>O00198</accession>
<keyword id="KW-0002">3D-structure</keyword>
<keyword id="KW-0053">Apoptosis</keyword>
<keyword id="KW-0472">Membrane</keyword>
<keyword id="KW-0496">Mitochondrion</keyword>
<keyword id="KW-1185">Reference proteome</keyword>
<keyword id="KW-0812">Transmembrane</keyword>
<keyword id="KW-1133">Transmembrane helix</keyword>
<gene>
    <name type="primary">HRK</name>
    <name type="synonym">BID3</name>
</gene>